<evidence type="ECO:0000255" key="1"/>
<evidence type="ECO:0000255" key="2">
    <source>
        <dbReference type="PROSITE-ProRule" id="PRU00219"/>
    </source>
</evidence>
<evidence type="ECO:0000305" key="3"/>
<comment type="similarity">
    <text evidence="3">To B.subtilis YwmC.</text>
</comment>
<keyword id="KW-1185">Reference proteome</keyword>
<keyword id="KW-0732">Signal</keyword>
<protein>
    <recommendedName>
        <fullName>Uncharacterized protein YwmD</fullName>
    </recommendedName>
</protein>
<name>YWMD_BACSU</name>
<sequence>MKKLLAAGIIGLLTVSIASPSFAAEKQADTNVAVLFDGSGSMVQKTGGERKIDIAKKSVKSFAELLPKDTNLMLRVFGHAGNNKLSGKALSCSTTETIYGLHPYEGSLFDNSLSELKPTGWTPIAKALADTRKEFEAFDADGKNVVYLITDGEETCGGDPAAEIEKLRASNVDTIVNIIGFNFDVKGNEEMKQAAVAGGGEYISANSADEFEQAWEKEAQKFTE</sequence>
<proteinExistence type="inferred from homology"/>
<feature type="signal peptide" evidence="1">
    <location>
        <begin position="1"/>
        <end position="23"/>
    </location>
</feature>
<feature type="chain" id="PRO_0000013739" description="Uncharacterized protein YwmD">
    <location>
        <begin position="24"/>
        <end position="224"/>
    </location>
</feature>
<feature type="domain" description="VWFA" evidence="2">
    <location>
        <begin position="31"/>
        <end position="224"/>
    </location>
</feature>
<reference key="1">
    <citation type="journal article" date="1997" name="Microbiology">
        <title>The Bacillus subtilis genome from gerBC (311 degrees) to licR (334 degrees).</title>
        <authorList>
            <person name="Presecan E."/>
            <person name="Moszer I."/>
            <person name="Boursier L."/>
            <person name="Cruz Ramos H."/>
            <person name="De La Fuente V."/>
            <person name="Hullo M.-F."/>
            <person name="Lelong C."/>
            <person name="Schleich S."/>
            <person name="Sekowska A."/>
            <person name="Song B.H."/>
            <person name="Villani G."/>
            <person name="Kunst F."/>
            <person name="Danchin A."/>
            <person name="Glaser P."/>
        </authorList>
    </citation>
    <scope>NUCLEOTIDE SEQUENCE [GENOMIC DNA]</scope>
    <source>
        <strain>168</strain>
    </source>
</reference>
<reference key="2">
    <citation type="journal article" date="1997" name="Nature">
        <title>The complete genome sequence of the Gram-positive bacterium Bacillus subtilis.</title>
        <authorList>
            <person name="Kunst F."/>
            <person name="Ogasawara N."/>
            <person name="Moszer I."/>
            <person name="Albertini A.M."/>
            <person name="Alloni G."/>
            <person name="Azevedo V."/>
            <person name="Bertero M.G."/>
            <person name="Bessieres P."/>
            <person name="Bolotin A."/>
            <person name="Borchert S."/>
            <person name="Borriss R."/>
            <person name="Boursier L."/>
            <person name="Brans A."/>
            <person name="Braun M."/>
            <person name="Brignell S.C."/>
            <person name="Bron S."/>
            <person name="Brouillet S."/>
            <person name="Bruschi C.V."/>
            <person name="Caldwell B."/>
            <person name="Capuano V."/>
            <person name="Carter N.M."/>
            <person name="Choi S.-K."/>
            <person name="Codani J.-J."/>
            <person name="Connerton I.F."/>
            <person name="Cummings N.J."/>
            <person name="Daniel R.A."/>
            <person name="Denizot F."/>
            <person name="Devine K.M."/>
            <person name="Duesterhoeft A."/>
            <person name="Ehrlich S.D."/>
            <person name="Emmerson P.T."/>
            <person name="Entian K.-D."/>
            <person name="Errington J."/>
            <person name="Fabret C."/>
            <person name="Ferrari E."/>
            <person name="Foulger D."/>
            <person name="Fritz C."/>
            <person name="Fujita M."/>
            <person name="Fujita Y."/>
            <person name="Fuma S."/>
            <person name="Galizzi A."/>
            <person name="Galleron N."/>
            <person name="Ghim S.-Y."/>
            <person name="Glaser P."/>
            <person name="Goffeau A."/>
            <person name="Golightly E.J."/>
            <person name="Grandi G."/>
            <person name="Guiseppi G."/>
            <person name="Guy B.J."/>
            <person name="Haga K."/>
            <person name="Haiech J."/>
            <person name="Harwood C.R."/>
            <person name="Henaut A."/>
            <person name="Hilbert H."/>
            <person name="Holsappel S."/>
            <person name="Hosono S."/>
            <person name="Hullo M.-F."/>
            <person name="Itaya M."/>
            <person name="Jones L.-M."/>
            <person name="Joris B."/>
            <person name="Karamata D."/>
            <person name="Kasahara Y."/>
            <person name="Klaerr-Blanchard M."/>
            <person name="Klein C."/>
            <person name="Kobayashi Y."/>
            <person name="Koetter P."/>
            <person name="Koningstein G."/>
            <person name="Krogh S."/>
            <person name="Kumano M."/>
            <person name="Kurita K."/>
            <person name="Lapidus A."/>
            <person name="Lardinois S."/>
            <person name="Lauber J."/>
            <person name="Lazarevic V."/>
            <person name="Lee S.-M."/>
            <person name="Levine A."/>
            <person name="Liu H."/>
            <person name="Masuda S."/>
            <person name="Mauel C."/>
            <person name="Medigue C."/>
            <person name="Medina N."/>
            <person name="Mellado R.P."/>
            <person name="Mizuno M."/>
            <person name="Moestl D."/>
            <person name="Nakai S."/>
            <person name="Noback M."/>
            <person name="Noone D."/>
            <person name="O'Reilly M."/>
            <person name="Ogawa K."/>
            <person name="Ogiwara A."/>
            <person name="Oudega B."/>
            <person name="Park S.-H."/>
            <person name="Parro V."/>
            <person name="Pohl T.M."/>
            <person name="Portetelle D."/>
            <person name="Porwollik S."/>
            <person name="Prescott A.M."/>
            <person name="Presecan E."/>
            <person name="Pujic P."/>
            <person name="Purnelle B."/>
            <person name="Rapoport G."/>
            <person name="Rey M."/>
            <person name="Reynolds S."/>
            <person name="Rieger M."/>
            <person name="Rivolta C."/>
            <person name="Rocha E."/>
            <person name="Roche B."/>
            <person name="Rose M."/>
            <person name="Sadaie Y."/>
            <person name="Sato T."/>
            <person name="Scanlan E."/>
            <person name="Schleich S."/>
            <person name="Schroeter R."/>
            <person name="Scoffone F."/>
            <person name="Sekiguchi J."/>
            <person name="Sekowska A."/>
            <person name="Seror S.J."/>
            <person name="Serror P."/>
            <person name="Shin B.-S."/>
            <person name="Soldo B."/>
            <person name="Sorokin A."/>
            <person name="Tacconi E."/>
            <person name="Takagi T."/>
            <person name="Takahashi H."/>
            <person name="Takemaru K."/>
            <person name="Takeuchi M."/>
            <person name="Tamakoshi A."/>
            <person name="Tanaka T."/>
            <person name="Terpstra P."/>
            <person name="Tognoni A."/>
            <person name="Tosato V."/>
            <person name="Uchiyama S."/>
            <person name="Vandenbol M."/>
            <person name="Vannier F."/>
            <person name="Vassarotti A."/>
            <person name="Viari A."/>
            <person name="Wambutt R."/>
            <person name="Wedler E."/>
            <person name="Wedler H."/>
            <person name="Weitzenegger T."/>
            <person name="Winters P."/>
            <person name="Wipat A."/>
            <person name="Yamamoto H."/>
            <person name="Yamane K."/>
            <person name="Yasumoto K."/>
            <person name="Yata K."/>
            <person name="Yoshida K."/>
            <person name="Yoshikawa H.-F."/>
            <person name="Zumstein E."/>
            <person name="Yoshikawa H."/>
            <person name="Danchin A."/>
        </authorList>
    </citation>
    <scope>NUCLEOTIDE SEQUENCE [LARGE SCALE GENOMIC DNA]</scope>
    <source>
        <strain>168</strain>
    </source>
</reference>
<gene>
    <name type="primary">ywmD</name>
    <name type="ordered locus">BSU36730</name>
</gene>
<dbReference type="EMBL" id="Z81356">
    <property type="protein sequence ID" value="CAB03681.1"/>
    <property type="molecule type" value="Genomic_DNA"/>
</dbReference>
<dbReference type="EMBL" id="AL009126">
    <property type="protein sequence ID" value="CAB15690.1"/>
    <property type="molecule type" value="Genomic_DNA"/>
</dbReference>
<dbReference type="PIR" id="H70062">
    <property type="entry name" value="H70062"/>
</dbReference>
<dbReference type="RefSeq" id="NP_391554.1">
    <property type="nucleotide sequence ID" value="NC_000964.3"/>
</dbReference>
<dbReference type="RefSeq" id="WP_003243553.1">
    <property type="nucleotide sequence ID" value="NZ_OZ025638.1"/>
</dbReference>
<dbReference type="SMR" id="P70961"/>
<dbReference type="FunCoup" id="P70961">
    <property type="interactions" value="6"/>
</dbReference>
<dbReference type="STRING" id="224308.BSU36730"/>
<dbReference type="PaxDb" id="224308-BSU36730"/>
<dbReference type="DNASU" id="936987"/>
<dbReference type="EnsemblBacteria" id="CAB15690">
    <property type="protein sequence ID" value="CAB15690"/>
    <property type="gene ID" value="BSU_36730"/>
</dbReference>
<dbReference type="GeneID" id="936987"/>
<dbReference type="KEGG" id="bsu:BSU36730"/>
<dbReference type="PATRIC" id="fig|224308.179.peg.3976"/>
<dbReference type="eggNOG" id="COG2304">
    <property type="taxonomic scope" value="Bacteria"/>
</dbReference>
<dbReference type="InParanoid" id="P70961"/>
<dbReference type="OrthoDB" id="9783818at2"/>
<dbReference type="PhylomeDB" id="P70961"/>
<dbReference type="BioCyc" id="BSUB:BSU36730-MONOMER"/>
<dbReference type="Proteomes" id="UP000001570">
    <property type="component" value="Chromosome"/>
</dbReference>
<dbReference type="CDD" id="cd01456">
    <property type="entry name" value="vWA_ywmD_type"/>
    <property type="match status" value="1"/>
</dbReference>
<dbReference type="Gene3D" id="3.40.50.410">
    <property type="entry name" value="von Willebrand factor, type A domain"/>
    <property type="match status" value="1"/>
</dbReference>
<dbReference type="InterPro" id="IPR002035">
    <property type="entry name" value="VWF_A"/>
</dbReference>
<dbReference type="InterPro" id="IPR036465">
    <property type="entry name" value="vWFA_dom_sf"/>
</dbReference>
<dbReference type="Pfam" id="PF00092">
    <property type="entry name" value="VWA"/>
    <property type="match status" value="1"/>
</dbReference>
<dbReference type="SMART" id="SM00327">
    <property type="entry name" value="VWA"/>
    <property type="match status" value="1"/>
</dbReference>
<dbReference type="SUPFAM" id="SSF53300">
    <property type="entry name" value="vWA-like"/>
    <property type="match status" value="1"/>
</dbReference>
<dbReference type="PROSITE" id="PS50234">
    <property type="entry name" value="VWFA"/>
    <property type="match status" value="1"/>
</dbReference>
<accession>P70961</accession>
<organism>
    <name type="scientific">Bacillus subtilis (strain 168)</name>
    <dbReference type="NCBI Taxonomy" id="224308"/>
    <lineage>
        <taxon>Bacteria</taxon>
        <taxon>Bacillati</taxon>
        <taxon>Bacillota</taxon>
        <taxon>Bacilli</taxon>
        <taxon>Bacillales</taxon>
        <taxon>Bacillaceae</taxon>
        <taxon>Bacillus</taxon>
    </lineage>
</organism>